<sequence>MLQIKSIPAFDDNYIWLIQNRDRDCAVVDPGSAEPVLAYLKQHDLNLKAVLITHHHHDHIGGVAELVHQFPEIHVVGPAQEPIPTLTHPVEDGDQIELFDERFMVLGLPGHTLGHIGYVGDGKLFCGDVLFSAGCGRVFEGTMEQMFSSLNKLLSLPEETQVYSAHEYTAANVAFALAVEPENEQLHIYRDEVSRLRAQNQPTLPTTLGREKWVNPFLRTQEPSVIRSVASQVSTLDPLTIFTALREWKNEF</sequence>
<reference key="1">
    <citation type="journal article" date="2008" name="PLoS ONE">
        <title>A recalibrated molecular clock and independent origins for the cholera pandemic clones.</title>
        <authorList>
            <person name="Feng L."/>
            <person name="Reeves P.R."/>
            <person name="Lan R."/>
            <person name="Ren Y."/>
            <person name="Gao C."/>
            <person name="Zhou Z."/>
            <person name="Ren Y."/>
            <person name="Cheng J."/>
            <person name="Wang W."/>
            <person name="Wang J."/>
            <person name="Qian W."/>
            <person name="Li D."/>
            <person name="Wang L."/>
        </authorList>
    </citation>
    <scope>NUCLEOTIDE SEQUENCE [LARGE SCALE GENOMIC DNA]</scope>
    <source>
        <strain>M66-2</strain>
    </source>
</reference>
<name>GLO2_VIBCM</name>
<feature type="chain" id="PRO_1000184185" description="Hydroxyacylglutathione hydrolase">
    <location>
        <begin position="1"/>
        <end position="252"/>
    </location>
</feature>
<feature type="binding site" evidence="1">
    <location>
        <position position="54"/>
    </location>
    <ligand>
        <name>Zn(2+)</name>
        <dbReference type="ChEBI" id="CHEBI:29105"/>
        <label>1</label>
    </ligand>
</feature>
<feature type="binding site" evidence="1">
    <location>
        <position position="56"/>
    </location>
    <ligand>
        <name>Zn(2+)</name>
        <dbReference type="ChEBI" id="CHEBI:29105"/>
        <label>1</label>
    </ligand>
</feature>
<feature type="binding site" evidence="1">
    <location>
        <position position="58"/>
    </location>
    <ligand>
        <name>Zn(2+)</name>
        <dbReference type="ChEBI" id="CHEBI:29105"/>
        <label>2</label>
    </ligand>
</feature>
<feature type="binding site" evidence="1">
    <location>
        <position position="59"/>
    </location>
    <ligand>
        <name>Zn(2+)</name>
        <dbReference type="ChEBI" id="CHEBI:29105"/>
        <label>2</label>
    </ligand>
</feature>
<feature type="binding site" evidence="1">
    <location>
        <position position="111"/>
    </location>
    <ligand>
        <name>Zn(2+)</name>
        <dbReference type="ChEBI" id="CHEBI:29105"/>
        <label>1</label>
    </ligand>
</feature>
<feature type="binding site" evidence="1">
    <location>
        <position position="128"/>
    </location>
    <ligand>
        <name>Zn(2+)</name>
        <dbReference type="ChEBI" id="CHEBI:29105"/>
        <label>1</label>
    </ligand>
</feature>
<feature type="binding site" evidence="1">
    <location>
        <position position="128"/>
    </location>
    <ligand>
        <name>Zn(2+)</name>
        <dbReference type="ChEBI" id="CHEBI:29105"/>
        <label>2</label>
    </ligand>
</feature>
<feature type="binding site" evidence="1">
    <location>
        <position position="166"/>
    </location>
    <ligand>
        <name>Zn(2+)</name>
        <dbReference type="ChEBI" id="CHEBI:29105"/>
        <label>2</label>
    </ligand>
</feature>
<organism>
    <name type="scientific">Vibrio cholerae serotype O1 (strain M66-2)</name>
    <dbReference type="NCBI Taxonomy" id="579112"/>
    <lineage>
        <taxon>Bacteria</taxon>
        <taxon>Pseudomonadati</taxon>
        <taxon>Pseudomonadota</taxon>
        <taxon>Gammaproteobacteria</taxon>
        <taxon>Vibrionales</taxon>
        <taxon>Vibrionaceae</taxon>
        <taxon>Vibrio</taxon>
    </lineage>
</organism>
<comment type="function">
    <text evidence="1">Thiolesterase that catalyzes the hydrolysis of S-D-lactoyl-glutathione to form glutathione and D-lactic acid.</text>
</comment>
<comment type="catalytic activity">
    <reaction evidence="1">
        <text>an S-(2-hydroxyacyl)glutathione + H2O = a 2-hydroxy carboxylate + glutathione + H(+)</text>
        <dbReference type="Rhea" id="RHEA:21864"/>
        <dbReference type="ChEBI" id="CHEBI:15377"/>
        <dbReference type="ChEBI" id="CHEBI:15378"/>
        <dbReference type="ChEBI" id="CHEBI:57925"/>
        <dbReference type="ChEBI" id="CHEBI:58896"/>
        <dbReference type="ChEBI" id="CHEBI:71261"/>
        <dbReference type="EC" id="3.1.2.6"/>
    </reaction>
</comment>
<comment type="cofactor">
    <cofactor evidence="1">
        <name>Zn(2+)</name>
        <dbReference type="ChEBI" id="CHEBI:29105"/>
    </cofactor>
    <text evidence="1">Binds 2 Zn(2+) ions per subunit.</text>
</comment>
<comment type="pathway">
    <text evidence="1">Secondary metabolite metabolism; methylglyoxal degradation; (R)-lactate from methylglyoxal: step 2/2.</text>
</comment>
<comment type="subunit">
    <text evidence="1">Monomer.</text>
</comment>
<comment type="similarity">
    <text evidence="1">Belongs to the metallo-beta-lactamase superfamily. Glyoxalase II family.</text>
</comment>
<protein>
    <recommendedName>
        <fullName evidence="1">Hydroxyacylglutathione hydrolase</fullName>
        <ecNumber evidence="1">3.1.2.6</ecNumber>
    </recommendedName>
    <alternativeName>
        <fullName evidence="1">Glyoxalase II</fullName>
        <shortName evidence="1">Glx II</shortName>
    </alternativeName>
</protein>
<dbReference type="EC" id="3.1.2.6" evidence="1"/>
<dbReference type="EMBL" id="CP001233">
    <property type="protein sequence ID" value="ACP06460.1"/>
    <property type="molecule type" value="Genomic_DNA"/>
</dbReference>
<dbReference type="RefSeq" id="WP_000939287.1">
    <property type="nucleotide sequence ID" value="NC_012578.1"/>
</dbReference>
<dbReference type="SMR" id="C3LPP0"/>
<dbReference type="GeneID" id="69719138"/>
<dbReference type="KEGG" id="vcm:VCM66_2159"/>
<dbReference type="HOGENOM" id="CLU_030571_4_1_6"/>
<dbReference type="UniPathway" id="UPA00619">
    <property type="reaction ID" value="UER00676"/>
</dbReference>
<dbReference type="Proteomes" id="UP000001217">
    <property type="component" value="Chromosome I"/>
</dbReference>
<dbReference type="GO" id="GO:0004416">
    <property type="term" value="F:hydroxyacylglutathione hydrolase activity"/>
    <property type="evidence" value="ECO:0007669"/>
    <property type="project" value="UniProtKB-UniRule"/>
</dbReference>
<dbReference type="GO" id="GO:0046872">
    <property type="term" value="F:metal ion binding"/>
    <property type="evidence" value="ECO:0007669"/>
    <property type="project" value="UniProtKB-KW"/>
</dbReference>
<dbReference type="GO" id="GO:0019243">
    <property type="term" value="P:methylglyoxal catabolic process to D-lactate via S-lactoyl-glutathione"/>
    <property type="evidence" value="ECO:0007669"/>
    <property type="project" value="InterPro"/>
</dbReference>
<dbReference type="CDD" id="cd07723">
    <property type="entry name" value="hydroxyacylglutathione_hydrolase_MBL-fold"/>
    <property type="match status" value="1"/>
</dbReference>
<dbReference type="Gene3D" id="3.60.15.10">
    <property type="entry name" value="Ribonuclease Z/Hydroxyacylglutathione hydrolase-like"/>
    <property type="match status" value="1"/>
</dbReference>
<dbReference type="HAMAP" id="MF_01374">
    <property type="entry name" value="Glyoxalase_2"/>
    <property type="match status" value="1"/>
</dbReference>
<dbReference type="InterPro" id="IPR035680">
    <property type="entry name" value="Clx_II_MBL"/>
</dbReference>
<dbReference type="InterPro" id="IPR050110">
    <property type="entry name" value="Glyoxalase_II_hydrolase"/>
</dbReference>
<dbReference type="InterPro" id="IPR032282">
    <property type="entry name" value="HAGH_C"/>
</dbReference>
<dbReference type="InterPro" id="IPR017782">
    <property type="entry name" value="Hydroxyacylglutathione_Hdrlase"/>
</dbReference>
<dbReference type="InterPro" id="IPR001279">
    <property type="entry name" value="Metallo-B-lactamas"/>
</dbReference>
<dbReference type="InterPro" id="IPR036866">
    <property type="entry name" value="RibonucZ/Hydroxyglut_hydro"/>
</dbReference>
<dbReference type="NCBIfam" id="TIGR03413">
    <property type="entry name" value="GSH_gloB"/>
    <property type="match status" value="1"/>
</dbReference>
<dbReference type="PANTHER" id="PTHR43705">
    <property type="entry name" value="HYDROXYACYLGLUTATHIONE HYDROLASE"/>
    <property type="match status" value="1"/>
</dbReference>
<dbReference type="PANTHER" id="PTHR43705:SF1">
    <property type="entry name" value="HYDROXYACYLGLUTATHIONE HYDROLASE GLOB"/>
    <property type="match status" value="1"/>
</dbReference>
<dbReference type="Pfam" id="PF16123">
    <property type="entry name" value="HAGH_C"/>
    <property type="match status" value="1"/>
</dbReference>
<dbReference type="Pfam" id="PF00753">
    <property type="entry name" value="Lactamase_B"/>
    <property type="match status" value="1"/>
</dbReference>
<dbReference type="PIRSF" id="PIRSF005457">
    <property type="entry name" value="Glx"/>
    <property type="match status" value="1"/>
</dbReference>
<dbReference type="SMART" id="SM00849">
    <property type="entry name" value="Lactamase_B"/>
    <property type="match status" value="1"/>
</dbReference>
<dbReference type="SUPFAM" id="SSF56281">
    <property type="entry name" value="Metallo-hydrolase/oxidoreductase"/>
    <property type="match status" value="1"/>
</dbReference>
<evidence type="ECO:0000255" key="1">
    <source>
        <dbReference type="HAMAP-Rule" id="MF_01374"/>
    </source>
</evidence>
<keyword id="KW-0378">Hydrolase</keyword>
<keyword id="KW-0479">Metal-binding</keyword>
<keyword id="KW-0862">Zinc</keyword>
<gene>
    <name evidence="1" type="primary">gloB</name>
    <name type="ordered locus">VCM66_2159</name>
</gene>
<proteinExistence type="inferred from homology"/>
<accession>C3LPP0</accession>